<protein>
    <recommendedName>
        <fullName evidence="1">Ribosomal RNA large subunit methyltransferase M</fullName>
        <ecNumber evidence="1">2.1.1.186</ecNumber>
    </recommendedName>
    <alternativeName>
        <fullName evidence="1">23S rRNA (cytidine2498-2'-O)-methyltransferase</fullName>
    </alternativeName>
    <alternativeName>
        <fullName evidence="1">23S rRNA 2'-O-ribose methyltransferase RlmM</fullName>
    </alternativeName>
</protein>
<evidence type="ECO:0000255" key="1">
    <source>
        <dbReference type="HAMAP-Rule" id="MF_01551"/>
    </source>
</evidence>
<comment type="function">
    <text evidence="1">Catalyzes the 2'-O-methylation at nucleotide C2498 in 23S rRNA.</text>
</comment>
<comment type="catalytic activity">
    <reaction evidence="1">
        <text>cytidine(2498) in 23S rRNA + S-adenosyl-L-methionine = 2'-O-methylcytidine(2498) in 23S rRNA + S-adenosyl-L-homocysteine + H(+)</text>
        <dbReference type="Rhea" id="RHEA:42788"/>
        <dbReference type="Rhea" id="RHEA-COMP:10244"/>
        <dbReference type="Rhea" id="RHEA-COMP:10245"/>
        <dbReference type="ChEBI" id="CHEBI:15378"/>
        <dbReference type="ChEBI" id="CHEBI:57856"/>
        <dbReference type="ChEBI" id="CHEBI:59789"/>
        <dbReference type="ChEBI" id="CHEBI:74495"/>
        <dbReference type="ChEBI" id="CHEBI:82748"/>
        <dbReference type="EC" id="2.1.1.186"/>
    </reaction>
</comment>
<comment type="subunit">
    <text evidence="1">Monomer.</text>
</comment>
<comment type="subcellular location">
    <subcellularLocation>
        <location evidence="1">Cytoplasm</location>
    </subcellularLocation>
</comment>
<comment type="similarity">
    <text evidence="1">Belongs to the class I-like SAM-binding methyltransferase superfamily. RNA methyltransferase RlmE family. RlmM subfamily.</text>
</comment>
<gene>
    <name evidence="1" type="primary">rlmM</name>
    <name type="ordered locus">ETA_27340</name>
</gene>
<organism>
    <name type="scientific">Erwinia tasmaniensis (strain DSM 17950 / CFBP 7177 / CIP 109463 / NCPPB 4357 / Et1/99)</name>
    <dbReference type="NCBI Taxonomy" id="465817"/>
    <lineage>
        <taxon>Bacteria</taxon>
        <taxon>Pseudomonadati</taxon>
        <taxon>Pseudomonadota</taxon>
        <taxon>Gammaproteobacteria</taxon>
        <taxon>Enterobacterales</taxon>
        <taxon>Erwiniaceae</taxon>
        <taxon>Erwinia</taxon>
    </lineage>
</organism>
<keyword id="KW-0963">Cytoplasm</keyword>
<keyword id="KW-0489">Methyltransferase</keyword>
<keyword id="KW-1185">Reference proteome</keyword>
<keyword id="KW-0698">rRNA processing</keyword>
<keyword id="KW-0949">S-adenosyl-L-methionine</keyword>
<keyword id="KW-0808">Transferase</keyword>
<feature type="chain" id="PRO_1000201511" description="Ribosomal RNA large subunit methyltransferase M">
    <location>
        <begin position="1"/>
        <end position="366"/>
    </location>
</feature>
<feature type="active site" description="Proton acceptor" evidence="1">
    <location>
        <position position="306"/>
    </location>
</feature>
<feature type="binding site" evidence="1">
    <location>
        <position position="188"/>
    </location>
    <ligand>
        <name>S-adenosyl-L-methionine</name>
        <dbReference type="ChEBI" id="CHEBI:59789"/>
    </ligand>
</feature>
<feature type="binding site" evidence="1">
    <location>
        <begin position="221"/>
        <end position="224"/>
    </location>
    <ligand>
        <name>S-adenosyl-L-methionine</name>
        <dbReference type="ChEBI" id="CHEBI:59789"/>
    </ligand>
</feature>
<feature type="binding site" evidence="1">
    <location>
        <position position="240"/>
    </location>
    <ligand>
        <name>S-adenosyl-L-methionine</name>
        <dbReference type="ChEBI" id="CHEBI:59789"/>
    </ligand>
</feature>
<feature type="binding site" evidence="1">
    <location>
        <position position="260"/>
    </location>
    <ligand>
        <name>S-adenosyl-L-methionine</name>
        <dbReference type="ChEBI" id="CHEBI:59789"/>
    </ligand>
</feature>
<feature type="binding site" evidence="1">
    <location>
        <position position="277"/>
    </location>
    <ligand>
        <name>S-adenosyl-L-methionine</name>
        <dbReference type="ChEBI" id="CHEBI:59789"/>
    </ligand>
</feature>
<proteinExistence type="inferred from homology"/>
<sequence length="366" mass="41670">MNKILLYCRQGFEKECAAEITAKAAEREIFGFARVKDDSAYVLFECYQQGEAEKLLAELPFSELIFSRQMIVVGELLRDLPPTNRITPVVGMLTGVVEKGGDLRVEVPDTNASKELLKFCRKFTVPLRASLRKDGILLNFESAKRPVVHVFFIASGCCYVGYSLPANNSPLFMGIPRLKFPSDAPSRSTLKLEEAFHVFIPADEWDERLASGMWAVDLGACPGGWTYQLVQRSMMVNAVDNGPMAPSLMDTGQVFHQREDGFKYRPTRNNNYWVVCDMVEKPVRVANLMADWLVNGWCREAIFNLKLPMKKRYEEVAQNLAMIHEKLAQNGINAQIQARQLYHDREEVTVHIRRVWSATPGRRDER</sequence>
<dbReference type="EC" id="2.1.1.186" evidence="1"/>
<dbReference type="EMBL" id="CU468135">
    <property type="protein sequence ID" value="CAO97780.1"/>
    <property type="molecule type" value="Genomic_DNA"/>
</dbReference>
<dbReference type="RefSeq" id="WP_012442437.1">
    <property type="nucleotide sequence ID" value="NC_010694.1"/>
</dbReference>
<dbReference type="SMR" id="B2VFX4"/>
<dbReference type="STRING" id="465817.ETA_27340"/>
<dbReference type="KEGG" id="eta:ETA_27340"/>
<dbReference type="eggNOG" id="COG2933">
    <property type="taxonomic scope" value="Bacteria"/>
</dbReference>
<dbReference type="HOGENOM" id="CLU_043780_0_0_6"/>
<dbReference type="OrthoDB" id="154490at2"/>
<dbReference type="Proteomes" id="UP000001726">
    <property type="component" value="Chromosome"/>
</dbReference>
<dbReference type="GO" id="GO:0005737">
    <property type="term" value="C:cytoplasm"/>
    <property type="evidence" value="ECO:0007669"/>
    <property type="project" value="UniProtKB-SubCell"/>
</dbReference>
<dbReference type="GO" id="GO:0008757">
    <property type="term" value="F:S-adenosylmethionine-dependent methyltransferase activity"/>
    <property type="evidence" value="ECO:0007669"/>
    <property type="project" value="UniProtKB-UniRule"/>
</dbReference>
<dbReference type="GO" id="GO:0032259">
    <property type="term" value="P:methylation"/>
    <property type="evidence" value="ECO:0007669"/>
    <property type="project" value="UniProtKB-KW"/>
</dbReference>
<dbReference type="GO" id="GO:0006364">
    <property type="term" value="P:rRNA processing"/>
    <property type="evidence" value="ECO:0007669"/>
    <property type="project" value="UniProtKB-UniRule"/>
</dbReference>
<dbReference type="Gene3D" id="3.30.2300.20">
    <property type="match status" value="1"/>
</dbReference>
<dbReference type="Gene3D" id="3.30.70.2810">
    <property type="match status" value="1"/>
</dbReference>
<dbReference type="Gene3D" id="3.40.50.150">
    <property type="entry name" value="Vaccinia Virus protein VP39"/>
    <property type="match status" value="1"/>
</dbReference>
<dbReference type="HAMAP" id="MF_01551">
    <property type="entry name" value="23SrRNA_methyltr_M"/>
    <property type="match status" value="1"/>
</dbReference>
<dbReference type="InterPro" id="IPR040739">
    <property type="entry name" value="RlmM_FDX"/>
</dbReference>
<dbReference type="InterPro" id="IPR048646">
    <property type="entry name" value="RlmM_THUMP-like"/>
</dbReference>
<dbReference type="InterPro" id="IPR002877">
    <property type="entry name" value="RNA_MeTrfase_FtsJ_dom"/>
</dbReference>
<dbReference type="InterPro" id="IPR011224">
    <property type="entry name" value="rRNA_MeTrfase_M"/>
</dbReference>
<dbReference type="InterPro" id="IPR029063">
    <property type="entry name" value="SAM-dependent_MTases_sf"/>
</dbReference>
<dbReference type="NCBIfam" id="NF008734">
    <property type="entry name" value="PRK11760.1"/>
    <property type="match status" value="1"/>
</dbReference>
<dbReference type="PANTHER" id="PTHR37524">
    <property type="entry name" value="RIBOSOMAL RNA LARGE SUBUNIT METHYLTRANSFERASE M"/>
    <property type="match status" value="1"/>
</dbReference>
<dbReference type="PANTHER" id="PTHR37524:SF2">
    <property type="entry name" value="RIBOSOMAL RNA METHYLTRANSFERASE FTSJ DOMAIN-CONTAINING PROTEIN"/>
    <property type="match status" value="1"/>
</dbReference>
<dbReference type="Pfam" id="PF01728">
    <property type="entry name" value="FtsJ"/>
    <property type="match status" value="1"/>
</dbReference>
<dbReference type="Pfam" id="PF18125">
    <property type="entry name" value="RlmM_FDX"/>
    <property type="match status" value="1"/>
</dbReference>
<dbReference type="Pfam" id="PF21239">
    <property type="entry name" value="RLMM_N"/>
    <property type="match status" value="1"/>
</dbReference>
<dbReference type="PIRSF" id="PIRSF028774">
    <property type="entry name" value="UCP028774"/>
    <property type="match status" value="1"/>
</dbReference>
<dbReference type="SUPFAM" id="SSF53335">
    <property type="entry name" value="S-adenosyl-L-methionine-dependent methyltransferases"/>
    <property type="match status" value="1"/>
</dbReference>
<reference key="1">
    <citation type="journal article" date="2008" name="Environ. Microbiol.">
        <title>The genome of Erwinia tasmaniensis strain Et1/99, a non-pathogenic bacterium in the genus Erwinia.</title>
        <authorList>
            <person name="Kube M."/>
            <person name="Migdoll A.M."/>
            <person name="Mueller I."/>
            <person name="Kuhl H."/>
            <person name="Beck A."/>
            <person name="Reinhardt R."/>
            <person name="Geider K."/>
        </authorList>
    </citation>
    <scope>NUCLEOTIDE SEQUENCE [LARGE SCALE GENOMIC DNA]</scope>
    <source>
        <strain>DSM 17950 / CFBP 7177 / CIP 109463 / NCPPB 4357 / Et1/99</strain>
    </source>
</reference>
<name>RLMM_ERWT9</name>
<accession>B2VFX4</accession>